<gene>
    <name evidence="1" type="primary">prfB</name>
    <name type="ordered locus">ECIAI39_3307</name>
</gene>
<keyword id="KW-0963">Cytoplasm</keyword>
<keyword id="KW-0488">Methylation</keyword>
<keyword id="KW-0648">Protein biosynthesis</keyword>
<feature type="chain" id="PRO_1000117259" description="Peptide chain release factor 2">
    <location>
        <begin position="1"/>
        <end position="365"/>
    </location>
</feature>
<feature type="modified residue" description="N5-methylglutamine" evidence="1">
    <location>
        <position position="252"/>
    </location>
</feature>
<sequence length="365" mass="41221">MFEINPVNNRIQDLTERSDVLRGYLDYDAKKERLEEVNAELEQPDVWNEPERAQALGKERSSLEAVVDTLDQMKQGLEDVSGLLELAVEADDEETFNEAVAELDALEEKLAQLEFRRMFSGEYDSADCYLDIQAGSGGTEAQDWASMLERMYLRWAESRGFKTEIIEESEGEVAGIKSVTIKISGDYAYGWLRTETGVHRLVRKSPFDSGGRRHTSFSSAFVYPEVDDDIDIEINPADLRIDVYRASGAGGQHVNRTESAVRITHIPTGIVTQCQNDRSQHKNKDQAMKQMKAKLYELEMQKKNAEKQAMEDNKSDIGWGSQIRSYVLDDSRIKDLRTGVETRNTQAVLDGSLDQFIEASLKAGL</sequence>
<proteinExistence type="inferred from homology"/>
<organism>
    <name type="scientific">Escherichia coli O7:K1 (strain IAI39 / ExPEC)</name>
    <dbReference type="NCBI Taxonomy" id="585057"/>
    <lineage>
        <taxon>Bacteria</taxon>
        <taxon>Pseudomonadati</taxon>
        <taxon>Pseudomonadota</taxon>
        <taxon>Gammaproteobacteria</taxon>
        <taxon>Enterobacterales</taxon>
        <taxon>Enterobacteriaceae</taxon>
        <taxon>Escherichia</taxon>
    </lineage>
</organism>
<accession>B7NW32</accession>
<dbReference type="EMBL" id="CU928164">
    <property type="protein sequence ID" value="CAR19425.2"/>
    <property type="molecule type" value="Genomic_DNA"/>
</dbReference>
<dbReference type="RefSeq" id="WP_001701073.1">
    <property type="nucleotide sequence ID" value="NC_011750.1"/>
</dbReference>
<dbReference type="RefSeq" id="YP_002409229.1">
    <property type="nucleotide sequence ID" value="NC_011750.1"/>
</dbReference>
<dbReference type="SMR" id="B7NW32"/>
<dbReference type="STRING" id="585057.ECIAI39_3307"/>
<dbReference type="GeneID" id="93779111"/>
<dbReference type="KEGG" id="ect:ECIAI39_3307"/>
<dbReference type="PATRIC" id="fig|585057.6.peg.3429"/>
<dbReference type="HOGENOM" id="CLU_220733_1_0_6"/>
<dbReference type="Proteomes" id="UP000000749">
    <property type="component" value="Chromosome"/>
</dbReference>
<dbReference type="GO" id="GO:0005737">
    <property type="term" value="C:cytoplasm"/>
    <property type="evidence" value="ECO:0007669"/>
    <property type="project" value="UniProtKB-SubCell"/>
</dbReference>
<dbReference type="GO" id="GO:0016149">
    <property type="term" value="F:translation release factor activity, codon specific"/>
    <property type="evidence" value="ECO:0007669"/>
    <property type="project" value="UniProtKB-UniRule"/>
</dbReference>
<dbReference type="FunFam" id="1.20.58.410:FF:000001">
    <property type="entry name" value="Peptide chain release factor 2"/>
    <property type="match status" value="1"/>
</dbReference>
<dbReference type="FunFam" id="3.30.160.20:FF:000010">
    <property type="entry name" value="Peptide chain release factor 2"/>
    <property type="match status" value="1"/>
</dbReference>
<dbReference type="Gene3D" id="3.30.160.20">
    <property type="match status" value="1"/>
</dbReference>
<dbReference type="Gene3D" id="3.30.70.1660">
    <property type="match status" value="1"/>
</dbReference>
<dbReference type="Gene3D" id="1.20.58.410">
    <property type="entry name" value="Release factor"/>
    <property type="match status" value="1"/>
</dbReference>
<dbReference type="HAMAP" id="MF_00094">
    <property type="entry name" value="Rel_fac_2"/>
    <property type="match status" value="1"/>
</dbReference>
<dbReference type="InterPro" id="IPR005139">
    <property type="entry name" value="PCRF"/>
</dbReference>
<dbReference type="InterPro" id="IPR000352">
    <property type="entry name" value="Pep_chain_release_fac_I"/>
</dbReference>
<dbReference type="InterPro" id="IPR045853">
    <property type="entry name" value="Pep_chain_release_fac_I_sf"/>
</dbReference>
<dbReference type="InterPro" id="IPR004374">
    <property type="entry name" value="PrfB"/>
</dbReference>
<dbReference type="NCBIfam" id="TIGR00020">
    <property type="entry name" value="prfB"/>
    <property type="match status" value="1"/>
</dbReference>
<dbReference type="PANTHER" id="PTHR43116:SF3">
    <property type="entry name" value="CLASS I PEPTIDE CHAIN RELEASE FACTOR"/>
    <property type="match status" value="1"/>
</dbReference>
<dbReference type="PANTHER" id="PTHR43116">
    <property type="entry name" value="PEPTIDE CHAIN RELEASE FACTOR 2"/>
    <property type="match status" value="1"/>
</dbReference>
<dbReference type="Pfam" id="PF03462">
    <property type="entry name" value="PCRF"/>
    <property type="match status" value="1"/>
</dbReference>
<dbReference type="Pfam" id="PF00472">
    <property type="entry name" value="RF-1"/>
    <property type="match status" value="1"/>
</dbReference>
<dbReference type="SMART" id="SM00937">
    <property type="entry name" value="PCRF"/>
    <property type="match status" value="1"/>
</dbReference>
<dbReference type="SUPFAM" id="SSF75620">
    <property type="entry name" value="Release factor"/>
    <property type="match status" value="1"/>
</dbReference>
<dbReference type="PROSITE" id="PS00745">
    <property type="entry name" value="RF_PROK_I"/>
    <property type="match status" value="1"/>
</dbReference>
<comment type="function">
    <text evidence="1">Peptide chain release factor 2 directs the termination of translation in response to the peptide chain termination codons UGA and UAA.</text>
</comment>
<comment type="subcellular location">
    <subcellularLocation>
        <location evidence="1">Cytoplasm</location>
    </subcellularLocation>
</comment>
<comment type="PTM">
    <text evidence="1">Methylated by PrmC. Methylation increases the termination efficiency of RF2.</text>
</comment>
<comment type="similarity">
    <text evidence="1">Belongs to the prokaryotic/mitochondrial release factor family.</text>
</comment>
<evidence type="ECO:0000255" key="1">
    <source>
        <dbReference type="HAMAP-Rule" id="MF_00094"/>
    </source>
</evidence>
<name>RF2_ECO7I</name>
<protein>
    <recommendedName>
        <fullName evidence="1">Peptide chain release factor 2</fullName>
        <shortName evidence="1">RF-2</shortName>
    </recommendedName>
</protein>
<reference key="1">
    <citation type="journal article" date="2009" name="PLoS Genet.">
        <title>Organised genome dynamics in the Escherichia coli species results in highly diverse adaptive paths.</title>
        <authorList>
            <person name="Touchon M."/>
            <person name="Hoede C."/>
            <person name="Tenaillon O."/>
            <person name="Barbe V."/>
            <person name="Baeriswyl S."/>
            <person name="Bidet P."/>
            <person name="Bingen E."/>
            <person name="Bonacorsi S."/>
            <person name="Bouchier C."/>
            <person name="Bouvet O."/>
            <person name="Calteau A."/>
            <person name="Chiapello H."/>
            <person name="Clermont O."/>
            <person name="Cruveiller S."/>
            <person name="Danchin A."/>
            <person name="Diard M."/>
            <person name="Dossat C."/>
            <person name="Karoui M.E."/>
            <person name="Frapy E."/>
            <person name="Garry L."/>
            <person name="Ghigo J.M."/>
            <person name="Gilles A.M."/>
            <person name="Johnson J."/>
            <person name="Le Bouguenec C."/>
            <person name="Lescat M."/>
            <person name="Mangenot S."/>
            <person name="Martinez-Jehanne V."/>
            <person name="Matic I."/>
            <person name="Nassif X."/>
            <person name="Oztas S."/>
            <person name="Petit M.A."/>
            <person name="Pichon C."/>
            <person name="Rouy Z."/>
            <person name="Ruf C.S."/>
            <person name="Schneider D."/>
            <person name="Tourret J."/>
            <person name="Vacherie B."/>
            <person name="Vallenet D."/>
            <person name="Medigue C."/>
            <person name="Rocha E.P.C."/>
            <person name="Denamur E."/>
        </authorList>
    </citation>
    <scope>NUCLEOTIDE SEQUENCE [LARGE SCALE GENOMIC DNA]</scope>
    <source>
        <strain>IAI39 / ExPEC</strain>
    </source>
</reference>